<comment type="subcellular location">
    <subcellularLocation>
        <location evidence="1 3">Secreted</location>
    </subcellularLocation>
</comment>
<comment type="tissue specificity">
    <text evidence="1">Expressed in the antennal lobe (at protein level).</text>
</comment>
<proteinExistence type="evidence at protein level"/>
<dbReference type="GO" id="GO:0005576">
    <property type="term" value="C:extracellular region"/>
    <property type="evidence" value="ECO:0007005"/>
    <property type="project" value="UniProtKB"/>
</dbReference>
<dbReference type="GO" id="GO:0007218">
    <property type="term" value="P:neuropeptide signaling pathway"/>
    <property type="evidence" value="ECO:0007669"/>
    <property type="project" value="UniProtKB-KW"/>
</dbReference>
<evidence type="ECO:0000269" key="1">
    <source>
    </source>
</evidence>
<evidence type="ECO:0000303" key="2">
    <source>
    </source>
</evidence>
<evidence type="ECO:0000305" key="3"/>
<keyword id="KW-0027">Amidation</keyword>
<keyword id="KW-0903">Direct protein sequencing</keyword>
<keyword id="KW-0527">Neuropeptide</keyword>
<keyword id="KW-0964">Secreted</keyword>
<sequence>APSMGFMGMR</sequence>
<feature type="peptide" id="PRO_0000395661" description="Tachykinin-related peptide 6" evidence="1">
    <location>
        <begin position="1"/>
        <end position="10"/>
    </location>
</feature>
<feature type="modified residue" description="Arginine amide" evidence="1">
    <location>
        <position position="10"/>
    </location>
</feature>
<name>TRP6_PENRU</name>
<accession>P86592</accession>
<organism>
    <name type="scientific">Pentatoma rufipes</name>
    <name type="common">Forest bug</name>
    <name type="synonym">Cimex rufipes</name>
    <dbReference type="NCBI Taxonomy" id="286670"/>
    <lineage>
        <taxon>Eukaryota</taxon>
        <taxon>Metazoa</taxon>
        <taxon>Ecdysozoa</taxon>
        <taxon>Arthropoda</taxon>
        <taxon>Hexapoda</taxon>
        <taxon>Insecta</taxon>
        <taxon>Pterygota</taxon>
        <taxon>Neoptera</taxon>
        <taxon>Paraneoptera</taxon>
        <taxon>Hemiptera</taxon>
        <taxon>Heteroptera</taxon>
        <taxon>Panheteroptera</taxon>
        <taxon>Pentatomomorpha</taxon>
        <taxon>Pentatomoidea</taxon>
        <taxon>Pentatomidae</taxon>
        <taxon>Pentatominae</taxon>
        <taxon>Pentatoma</taxon>
    </lineage>
</organism>
<protein>
    <recommendedName>
        <fullName evidence="2">Tachykinin-related peptide 6</fullName>
        <shortName evidence="2">TKRP-6</shortName>
    </recommendedName>
</protein>
<reference evidence="3" key="1">
    <citation type="journal article" date="2009" name="Peptides">
        <title>Neuropeptides in Heteroptera: identification of allatotropin-related peptide and tachykinin-related peptides using MALDI-TOF mass spectrometry.</title>
        <authorList>
            <person name="Neupert S."/>
            <person name="Russell W.K."/>
            <person name="Russell D.H."/>
            <person name="Lopez J.D. Jr."/>
            <person name="Predel R."/>
            <person name="Nachman R.J."/>
        </authorList>
    </citation>
    <scope>PROTEIN SEQUENCE</scope>
    <scope>SUBCELLULAR LOCATION</scope>
    <scope>TISSUE SPECIFICITY</scope>
    <scope>AMIDATION AT ARG-10</scope>
    <source>
        <tissue evidence="1">Antennal lobe</tissue>
    </source>
</reference>